<protein>
    <recommendedName>
        <fullName evidence="2">Translation initiation factor IF-2</fullName>
    </recommendedName>
</protein>
<feature type="chain" id="PRO_0000228248" description="Translation initiation factor IF-2">
    <location>
        <begin position="1"/>
        <end position="927"/>
    </location>
</feature>
<feature type="domain" description="tr-type G">
    <location>
        <begin position="428"/>
        <end position="597"/>
    </location>
</feature>
<feature type="region of interest" description="Disordered" evidence="3">
    <location>
        <begin position="27"/>
        <end position="338"/>
    </location>
</feature>
<feature type="region of interest" description="G1" evidence="1">
    <location>
        <begin position="437"/>
        <end position="444"/>
    </location>
</feature>
<feature type="region of interest" description="G2" evidence="1">
    <location>
        <begin position="462"/>
        <end position="466"/>
    </location>
</feature>
<feature type="region of interest" description="G3" evidence="1">
    <location>
        <begin position="483"/>
        <end position="486"/>
    </location>
</feature>
<feature type="region of interest" description="G4" evidence="1">
    <location>
        <begin position="537"/>
        <end position="540"/>
    </location>
</feature>
<feature type="region of interest" description="G5" evidence="1">
    <location>
        <begin position="573"/>
        <end position="575"/>
    </location>
</feature>
<feature type="compositionally biased region" description="Polar residues" evidence="3">
    <location>
        <begin position="49"/>
        <end position="69"/>
    </location>
</feature>
<feature type="compositionally biased region" description="Basic and acidic residues" evidence="3">
    <location>
        <begin position="70"/>
        <end position="86"/>
    </location>
</feature>
<feature type="compositionally biased region" description="Basic and acidic residues" evidence="3">
    <location>
        <begin position="101"/>
        <end position="138"/>
    </location>
</feature>
<feature type="compositionally biased region" description="Low complexity" evidence="3">
    <location>
        <begin position="146"/>
        <end position="159"/>
    </location>
</feature>
<feature type="compositionally biased region" description="Basic and acidic residues" evidence="3">
    <location>
        <begin position="160"/>
        <end position="171"/>
    </location>
</feature>
<feature type="compositionally biased region" description="Basic and acidic residues" evidence="3">
    <location>
        <begin position="202"/>
        <end position="226"/>
    </location>
</feature>
<feature type="compositionally biased region" description="Basic and acidic residues" evidence="3">
    <location>
        <begin position="234"/>
        <end position="257"/>
    </location>
</feature>
<feature type="compositionally biased region" description="Low complexity" evidence="3">
    <location>
        <begin position="300"/>
        <end position="316"/>
    </location>
</feature>
<feature type="binding site" evidence="2">
    <location>
        <begin position="437"/>
        <end position="444"/>
    </location>
    <ligand>
        <name>GTP</name>
        <dbReference type="ChEBI" id="CHEBI:37565"/>
    </ligand>
</feature>
<feature type="binding site" evidence="2">
    <location>
        <begin position="483"/>
        <end position="487"/>
    </location>
    <ligand>
        <name>GTP</name>
        <dbReference type="ChEBI" id="CHEBI:37565"/>
    </ligand>
</feature>
<feature type="binding site" evidence="2">
    <location>
        <begin position="537"/>
        <end position="540"/>
    </location>
    <ligand>
        <name>GTP</name>
        <dbReference type="ChEBI" id="CHEBI:37565"/>
    </ligand>
</feature>
<gene>
    <name evidence="2" type="primary">infB</name>
    <name type="ordered locus">SAK_0455</name>
</gene>
<keyword id="KW-0963">Cytoplasm</keyword>
<keyword id="KW-0342">GTP-binding</keyword>
<keyword id="KW-0396">Initiation factor</keyword>
<keyword id="KW-0547">Nucleotide-binding</keyword>
<keyword id="KW-0648">Protein biosynthesis</keyword>
<proteinExistence type="inferred from homology"/>
<accession>Q3K302</accession>
<sequence>MSKKRLHEIAKEIGKTSKEVVEQAQSLGLPVKSHASSVEENDATRIVESFSSSKTKAPTNSVQTNQGVKTESKTVETKQGLSDDKPSTQPVAKPKPQSRNFKAEREARAKAEAEKRQHNGDHRKNNRHNDTRSDDRRHQGQKRSNGNRNDNRQGQQNNRNKNDGRYADHKQKPQTRPQQPAGNRIDFKARAAALKAEQNAEYSRHSEQRFREEQEAKRQAAKEQELAKAAALKAQEEAQKAKEKLASKPVAKVKEIVNKVAATPSQTADSRRKKQTRSDKSRQFSNENEDGQKQTKNKKNWNNQNQVRNQRNSNWNHNKKNKKGKTNGAPKPVTERKFHELPKEFEYTEGMTVAEIAKRIKREPAEIVKKLFMMGVMATQNQSLDGDTIELLMVDYGIEAHAKVEVDEADIERFFADEDYLNPDNLTERPPVVTIMGHVDHGKTTLLDTLRNSRVATGEAGGITQHIGAYQIEEAGKKITFLDTPGHAAFTSMRARGASVTDITILIVAADDGVMPQTVEAINHSKAAGVPIIVAINKIDKPGANPERVISELAEHGVISTAWGGESEFVEISAKFGKNIQELLETVLLVAEMEELKADADVRAIGTVIEARLDKGKGAVATLLVQQGTLNVQDPIVVGNTFGRVRAMTNDLGRRVKVAGPSTPVSITGLNEAPMAGDHFAVYADEKAARAAGEERAKRALLKQRQNTQRVSLENLFDTLKAGEVKSVNVIIKADVQGSVEALAASLLKIDVEGVKVNVVHSAVGAINESDVTLAEASNAVIIGFNVRPTPQARQQADADDVEIRQHSIIYKVIEEVEEAMKGKLDPEYQEKILGEAIIRETFKVSKVGTIGGFMVINGKVTRDSSVRVIRDGVVIFDGKLASLKHYKDDVKEVGNAQEGGLMIENYNDLKEDDTIEAYIMEEIKRK</sequence>
<organism>
    <name type="scientific">Streptococcus agalactiae serotype Ia (strain ATCC 27591 / A909 / CDC SS700)</name>
    <dbReference type="NCBI Taxonomy" id="205921"/>
    <lineage>
        <taxon>Bacteria</taxon>
        <taxon>Bacillati</taxon>
        <taxon>Bacillota</taxon>
        <taxon>Bacilli</taxon>
        <taxon>Lactobacillales</taxon>
        <taxon>Streptococcaceae</taxon>
        <taxon>Streptococcus</taxon>
    </lineage>
</organism>
<comment type="function">
    <text evidence="2">One of the essential components for the initiation of protein synthesis. Protects formylmethionyl-tRNA from spontaneous hydrolysis and promotes its binding to the 30S ribosomal subunits. Also involved in the hydrolysis of GTP during the formation of the 70S ribosomal complex.</text>
</comment>
<comment type="subcellular location">
    <subcellularLocation>
        <location evidence="2">Cytoplasm</location>
    </subcellularLocation>
</comment>
<comment type="similarity">
    <text evidence="2">Belongs to the TRAFAC class translation factor GTPase superfamily. Classic translation factor GTPase family. IF-2 subfamily.</text>
</comment>
<reference key="1">
    <citation type="journal article" date="2005" name="Proc. Natl. Acad. Sci. U.S.A.">
        <title>Genome analysis of multiple pathogenic isolates of Streptococcus agalactiae: implications for the microbial 'pan-genome'.</title>
        <authorList>
            <person name="Tettelin H."/>
            <person name="Masignani V."/>
            <person name="Cieslewicz M.J."/>
            <person name="Donati C."/>
            <person name="Medini D."/>
            <person name="Ward N.L."/>
            <person name="Angiuoli S.V."/>
            <person name="Crabtree J."/>
            <person name="Jones A.L."/>
            <person name="Durkin A.S."/>
            <person name="DeBoy R.T."/>
            <person name="Davidsen T.M."/>
            <person name="Mora M."/>
            <person name="Scarselli M."/>
            <person name="Margarit y Ros I."/>
            <person name="Peterson J.D."/>
            <person name="Hauser C.R."/>
            <person name="Sundaram J.P."/>
            <person name="Nelson W.C."/>
            <person name="Madupu R."/>
            <person name="Brinkac L.M."/>
            <person name="Dodson R.J."/>
            <person name="Rosovitz M.J."/>
            <person name="Sullivan S.A."/>
            <person name="Daugherty S.C."/>
            <person name="Haft D.H."/>
            <person name="Selengut J."/>
            <person name="Gwinn M.L."/>
            <person name="Zhou L."/>
            <person name="Zafar N."/>
            <person name="Khouri H."/>
            <person name="Radune D."/>
            <person name="Dimitrov G."/>
            <person name="Watkins K."/>
            <person name="O'Connor K.J."/>
            <person name="Smith S."/>
            <person name="Utterback T.R."/>
            <person name="White O."/>
            <person name="Rubens C.E."/>
            <person name="Grandi G."/>
            <person name="Madoff L.C."/>
            <person name="Kasper D.L."/>
            <person name="Telford J.L."/>
            <person name="Wessels M.R."/>
            <person name="Rappuoli R."/>
            <person name="Fraser C.M."/>
        </authorList>
    </citation>
    <scope>NUCLEOTIDE SEQUENCE [LARGE SCALE GENOMIC DNA]</scope>
    <source>
        <strain>ATCC 27591 / A909 / CDC SS700</strain>
    </source>
</reference>
<dbReference type="EMBL" id="CP000114">
    <property type="protein sequence ID" value="ABA45080.1"/>
    <property type="molecule type" value="Genomic_DNA"/>
</dbReference>
<dbReference type="RefSeq" id="WP_000039152.1">
    <property type="nucleotide sequence ID" value="NC_007432.1"/>
</dbReference>
<dbReference type="SMR" id="Q3K302"/>
<dbReference type="KEGG" id="sak:SAK_0455"/>
<dbReference type="HOGENOM" id="CLU_006301_5_0_9"/>
<dbReference type="GO" id="GO:0005829">
    <property type="term" value="C:cytosol"/>
    <property type="evidence" value="ECO:0007669"/>
    <property type="project" value="TreeGrafter"/>
</dbReference>
<dbReference type="GO" id="GO:0005525">
    <property type="term" value="F:GTP binding"/>
    <property type="evidence" value="ECO:0007669"/>
    <property type="project" value="UniProtKB-KW"/>
</dbReference>
<dbReference type="GO" id="GO:0003924">
    <property type="term" value="F:GTPase activity"/>
    <property type="evidence" value="ECO:0007669"/>
    <property type="project" value="UniProtKB-UniRule"/>
</dbReference>
<dbReference type="GO" id="GO:0003743">
    <property type="term" value="F:translation initiation factor activity"/>
    <property type="evidence" value="ECO:0007669"/>
    <property type="project" value="UniProtKB-UniRule"/>
</dbReference>
<dbReference type="CDD" id="cd01887">
    <property type="entry name" value="IF2_eIF5B"/>
    <property type="match status" value="1"/>
</dbReference>
<dbReference type="CDD" id="cd03702">
    <property type="entry name" value="IF2_mtIF2_II"/>
    <property type="match status" value="1"/>
</dbReference>
<dbReference type="CDD" id="cd03692">
    <property type="entry name" value="mtIF2_IVc"/>
    <property type="match status" value="1"/>
</dbReference>
<dbReference type="FunFam" id="2.40.30.10:FF:000007">
    <property type="entry name" value="Translation initiation factor IF-2"/>
    <property type="match status" value="1"/>
</dbReference>
<dbReference type="FunFam" id="2.40.30.10:FF:000008">
    <property type="entry name" value="Translation initiation factor IF-2"/>
    <property type="match status" value="1"/>
</dbReference>
<dbReference type="FunFam" id="3.40.50.10050:FF:000001">
    <property type="entry name" value="Translation initiation factor IF-2"/>
    <property type="match status" value="1"/>
</dbReference>
<dbReference type="FunFam" id="3.40.50.300:FF:000019">
    <property type="entry name" value="Translation initiation factor IF-2"/>
    <property type="match status" value="1"/>
</dbReference>
<dbReference type="Gene3D" id="1.10.10.2480">
    <property type="match status" value="1"/>
</dbReference>
<dbReference type="Gene3D" id="3.40.50.300">
    <property type="entry name" value="P-loop containing nucleotide triphosphate hydrolases"/>
    <property type="match status" value="1"/>
</dbReference>
<dbReference type="Gene3D" id="2.40.30.10">
    <property type="entry name" value="Translation factors"/>
    <property type="match status" value="2"/>
</dbReference>
<dbReference type="Gene3D" id="3.40.50.10050">
    <property type="entry name" value="Translation initiation factor IF- 2, domain 3"/>
    <property type="match status" value="1"/>
</dbReference>
<dbReference type="HAMAP" id="MF_00100_B">
    <property type="entry name" value="IF_2_B"/>
    <property type="match status" value="1"/>
</dbReference>
<dbReference type="InterPro" id="IPR053905">
    <property type="entry name" value="EF-G-like_DII"/>
</dbReference>
<dbReference type="InterPro" id="IPR044145">
    <property type="entry name" value="IF2_II"/>
</dbReference>
<dbReference type="InterPro" id="IPR006847">
    <property type="entry name" value="IF2_N"/>
</dbReference>
<dbReference type="InterPro" id="IPR027417">
    <property type="entry name" value="P-loop_NTPase"/>
</dbReference>
<dbReference type="InterPro" id="IPR005225">
    <property type="entry name" value="Small_GTP-bd"/>
</dbReference>
<dbReference type="InterPro" id="IPR000795">
    <property type="entry name" value="T_Tr_GTP-bd_dom"/>
</dbReference>
<dbReference type="InterPro" id="IPR000178">
    <property type="entry name" value="TF_IF2_bacterial-like"/>
</dbReference>
<dbReference type="InterPro" id="IPR015760">
    <property type="entry name" value="TIF_IF2"/>
</dbReference>
<dbReference type="InterPro" id="IPR023115">
    <property type="entry name" value="TIF_IF2_dom3"/>
</dbReference>
<dbReference type="InterPro" id="IPR036925">
    <property type="entry name" value="TIF_IF2_dom3_sf"/>
</dbReference>
<dbReference type="InterPro" id="IPR009000">
    <property type="entry name" value="Transl_B-barrel_sf"/>
</dbReference>
<dbReference type="NCBIfam" id="TIGR00487">
    <property type="entry name" value="IF-2"/>
    <property type="match status" value="1"/>
</dbReference>
<dbReference type="NCBIfam" id="TIGR00231">
    <property type="entry name" value="small_GTP"/>
    <property type="match status" value="1"/>
</dbReference>
<dbReference type="PANTHER" id="PTHR43381:SF5">
    <property type="entry name" value="TR-TYPE G DOMAIN-CONTAINING PROTEIN"/>
    <property type="match status" value="1"/>
</dbReference>
<dbReference type="PANTHER" id="PTHR43381">
    <property type="entry name" value="TRANSLATION INITIATION FACTOR IF-2-RELATED"/>
    <property type="match status" value="1"/>
</dbReference>
<dbReference type="Pfam" id="PF22042">
    <property type="entry name" value="EF-G_D2"/>
    <property type="match status" value="1"/>
</dbReference>
<dbReference type="Pfam" id="PF00009">
    <property type="entry name" value="GTP_EFTU"/>
    <property type="match status" value="1"/>
</dbReference>
<dbReference type="Pfam" id="PF11987">
    <property type="entry name" value="IF-2"/>
    <property type="match status" value="1"/>
</dbReference>
<dbReference type="Pfam" id="PF04760">
    <property type="entry name" value="IF2_N"/>
    <property type="match status" value="2"/>
</dbReference>
<dbReference type="SUPFAM" id="SSF52156">
    <property type="entry name" value="Initiation factor IF2/eIF5b, domain 3"/>
    <property type="match status" value="1"/>
</dbReference>
<dbReference type="SUPFAM" id="SSF52540">
    <property type="entry name" value="P-loop containing nucleoside triphosphate hydrolases"/>
    <property type="match status" value="1"/>
</dbReference>
<dbReference type="SUPFAM" id="SSF50447">
    <property type="entry name" value="Translation proteins"/>
    <property type="match status" value="2"/>
</dbReference>
<dbReference type="PROSITE" id="PS51722">
    <property type="entry name" value="G_TR_2"/>
    <property type="match status" value="1"/>
</dbReference>
<dbReference type="PROSITE" id="PS01176">
    <property type="entry name" value="IF2"/>
    <property type="match status" value="1"/>
</dbReference>
<evidence type="ECO:0000250" key="1"/>
<evidence type="ECO:0000255" key="2">
    <source>
        <dbReference type="HAMAP-Rule" id="MF_00100"/>
    </source>
</evidence>
<evidence type="ECO:0000256" key="3">
    <source>
        <dbReference type="SAM" id="MobiDB-lite"/>
    </source>
</evidence>
<name>IF2_STRA1</name>